<reference key="1">
    <citation type="submission" date="2007-03" db="EMBL/GenBank/DDBJ databases">
        <title>Complete sequence of chromosome 1 of Burkholderia vietnamiensis G4.</title>
        <authorList>
            <consortium name="US DOE Joint Genome Institute"/>
            <person name="Copeland A."/>
            <person name="Lucas S."/>
            <person name="Lapidus A."/>
            <person name="Barry K."/>
            <person name="Detter J.C."/>
            <person name="Glavina del Rio T."/>
            <person name="Hammon N."/>
            <person name="Israni S."/>
            <person name="Dalin E."/>
            <person name="Tice H."/>
            <person name="Pitluck S."/>
            <person name="Chain P."/>
            <person name="Malfatti S."/>
            <person name="Shin M."/>
            <person name="Vergez L."/>
            <person name="Schmutz J."/>
            <person name="Larimer F."/>
            <person name="Land M."/>
            <person name="Hauser L."/>
            <person name="Kyrpides N."/>
            <person name="Tiedje J."/>
            <person name="Richardson P."/>
        </authorList>
    </citation>
    <scope>NUCLEOTIDE SEQUENCE [LARGE SCALE GENOMIC DNA]</scope>
    <source>
        <strain>G4 / LMG 22486</strain>
    </source>
</reference>
<keyword id="KW-0963">Cytoplasm</keyword>
<keyword id="KW-0489">Methyltransferase</keyword>
<keyword id="KW-0949">S-adenosyl-L-methionine</keyword>
<keyword id="KW-0808">Transferase</keyword>
<protein>
    <recommendedName>
        <fullName evidence="1">Ribosomal protein L11 methyltransferase</fullName>
        <shortName evidence="1">L11 Mtase</shortName>
        <ecNumber evidence="1">2.1.1.-</ecNumber>
    </recommendedName>
</protein>
<evidence type="ECO:0000255" key="1">
    <source>
        <dbReference type="HAMAP-Rule" id="MF_00735"/>
    </source>
</evidence>
<proteinExistence type="inferred from homology"/>
<comment type="function">
    <text evidence="1">Methylates ribosomal protein L11.</text>
</comment>
<comment type="catalytic activity">
    <reaction evidence="1">
        <text>L-lysyl-[protein] + 3 S-adenosyl-L-methionine = N(6),N(6),N(6)-trimethyl-L-lysyl-[protein] + 3 S-adenosyl-L-homocysteine + 3 H(+)</text>
        <dbReference type="Rhea" id="RHEA:54192"/>
        <dbReference type="Rhea" id="RHEA-COMP:9752"/>
        <dbReference type="Rhea" id="RHEA-COMP:13826"/>
        <dbReference type="ChEBI" id="CHEBI:15378"/>
        <dbReference type="ChEBI" id="CHEBI:29969"/>
        <dbReference type="ChEBI" id="CHEBI:57856"/>
        <dbReference type="ChEBI" id="CHEBI:59789"/>
        <dbReference type="ChEBI" id="CHEBI:61961"/>
    </reaction>
</comment>
<comment type="subcellular location">
    <subcellularLocation>
        <location evidence="1">Cytoplasm</location>
    </subcellularLocation>
</comment>
<comment type="similarity">
    <text evidence="1">Belongs to the methyltransferase superfamily. PrmA family.</text>
</comment>
<organism>
    <name type="scientific">Burkholderia vietnamiensis (strain G4 / LMG 22486)</name>
    <name type="common">Burkholderia cepacia (strain R1808)</name>
    <dbReference type="NCBI Taxonomy" id="269482"/>
    <lineage>
        <taxon>Bacteria</taxon>
        <taxon>Pseudomonadati</taxon>
        <taxon>Pseudomonadota</taxon>
        <taxon>Betaproteobacteria</taxon>
        <taxon>Burkholderiales</taxon>
        <taxon>Burkholderiaceae</taxon>
        <taxon>Burkholderia</taxon>
        <taxon>Burkholderia cepacia complex</taxon>
    </lineage>
</organism>
<dbReference type="EC" id="2.1.1.-" evidence="1"/>
<dbReference type="EMBL" id="CP000614">
    <property type="protein sequence ID" value="ABO53590.1"/>
    <property type="molecule type" value="Genomic_DNA"/>
</dbReference>
<dbReference type="SMR" id="A4JBD7"/>
<dbReference type="KEGG" id="bvi:Bcep1808_0578"/>
<dbReference type="eggNOG" id="COG2264">
    <property type="taxonomic scope" value="Bacteria"/>
</dbReference>
<dbReference type="HOGENOM" id="CLU_049382_4_1_4"/>
<dbReference type="Proteomes" id="UP000002287">
    <property type="component" value="Chromosome 1"/>
</dbReference>
<dbReference type="GO" id="GO:0005829">
    <property type="term" value="C:cytosol"/>
    <property type="evidence" value="ECO:0007669"/>
    <property type="project" value="TreeGrafter"/>
</dbReference>
<dbReference type="GO" id="GO:0016279">
    <property type="term" value="F:protein-lysine N-methyltransferase activity"/>
    <property type="evidence" value="ECO:0007669"/>
    <property type="project" value="TreeGrafter"/>
</dbReference>
<dbReference type="GO" id="GO:0032259">
    <property type="term" value="P:methylation"/>
    <property type="evidence" value="ECO:0007669"/>
    <property type="project" value="UniProtKB-KW"/>
</dbReference>
<dbReference type="CDD" id="cd02440">
    <property type="entry name" value="AdoMet_MTases"/>
    <property type="match status" value="1"/>
</dbReference>
<dbReference type="Gene3D" id="3.40.50.150">
    <property type="entry name" value="Vaccinia Virus protein VP39"/>
    <property type="match status" value="1"/>
</dbReference>
<dbReference type="HAMAP" id="MF_00735">
    <property type="entry name" value="Methyltr_PrmA"/>
    <property type="match status" value="1"/>
</dbReference>
<dbReference type="InterPro" id="IPR050078">
    <property type="entry name" value="Ribosomal_L11_MeTrfase_PrmA"/>
</dbReference>
<dbReference type="InterPro" id="IPR004498">
    <property type="entry name" value="Ribosomal_PrmA_MeTrfase"/>
</dbReference>
<dbReference type="InterPro" id="IPR029063">
    <property type="entry name" value="SAM-dependent_MTases_sf"/>
</dbReference>
<dbReference type="NCBIfam" id="TIGR00406">
    <property type="entry name" value="prmA"/>
    <property type="match status" value="1"/>
</dbReference>
<dbReference type="PANTHER" id="PTHR43648">
    <property type="entry name" value="ELECTRON TRANSFER FLAVOPROTEIN BETA SUBUNIT LYSINE METHYLTRANSFERASE"/>
    <property type="match status" value="1"/>
</dbReference>
<dbReference type="PANTHER" id="PTHR43648:SF1">
    <property type="entry name" value="ELECTRON TRANSFER FLAVOPROTEIN BETA SUBUNIT LYSINE METHYLTRANSFERASE"/>
    <property type="match status" value="1"/>
</dbReference>
<dbReference type="Pfam" id="PF06325">
    <property type="entry name" value="PrmA"/>
    <property type="match status" value="1"/>
</dbReference>
<dbReference type="PIRSF" id="PIRSF000401">
    <property type="entry name" value="RPL11_MTase"/>
    <property type="match status" value="1"/>
</dbReference>
<dbReference type="SUPFAM" id="SSF53335">
    <property type="entry name" value="S-adenosyl-L-methionine-dependent methyltransferases"/>
    <property type="match status" value="1"/>
</dbReference>
<feature type="chain" id="PRO_1000046000" description="Ribosomal protein L11 methyltransferase">
    <location>
        <begin position="1"/>
        <end position="300"/>
    </location>
</feature>
<feature type="binding site" evidence="1">
    <location>
        <position position="152"/>
    </location>
    <ligand>
        <name>S-adenosyl-L-methionine</name>
        <dbReference type="ChEBI" id="CHEBI:59789"/>
    </ligand>
</feature>
<feature type="binding site" evidence="1">
    <location>
        <position position="173"/>
    </location>
    <ligand>
        <name>S-adenosyl-L-methionine</name>
        <dbReference type="ChEBI" id="CHEBI:59789"/>
    </ligand>
</feature>
<feature type="binding site" evidence="1">
    <location>
        <position position="195"/>
    </location>
    <ligand>
        <name>S-adenosyl-L-methionine</name>
        <dbReference type="ChEBI" id="CHEBI:59789"/>
    </ligand>
</feature>
<feature type="binding site" evidence="1">
    <location>
        <position position="234"/>
    </location>
    <ligand>
        <name>S-adenosyl-L-methionine</name>
        <dbReference type="ChEBI" id="CHEBI:59789"/>
    </ligand>
</feature>
<name>PRMA_BURVG</name>
<gene>
    <name evidence="1" type="primary">prmA</name>
    <name type="ordered locus">Bcep1808_0578</name>
</gene>
<accession>A4JBD7</accession>
<sequence length="300" mass="32526">MSYRELVVELAREHAEALSDALLDLGALSVSVEDADADTPDEQPLFGEPGLVPERTAWQHSRVVALLSPDLEPAVLLAAAANEIGIADTPKFDVREVEEQDWVRLTQSQFEPIPIGERIWVVPSWHDAPDPDALILELDPGLAFGTGSHPTTRLCMEWLEQTVKPGQSVLDYGCGSGILAILARKCGADPVIGIDIDPQAVESARQNSERNHADVTYGLPDACPDGEFDIVVANILSNPLKLMASMLASKVKPGGRIALSGVLARQADEVAAVYARYVDISVWREHEGWVCLAGTRRESH</sequence>